<accession>B9KES4</accession>
<evidence type="ECO:0000255" key="1">
    <source>
        <dbReference type="HAMAP-Rule" id="MF_00530"/>
    </source>
</evidence>
<gene>
    <name evidence="1" type="primary">atpC</name>
    <name type="ordered locus">Cla_0196</name>
</gene>
<reference key="1">
    <citation type="journal article" date="2008" name="Foodborne Pathog. Dis.">
        <title>The complete genome sequence and analysis of the human pathogen Campylobacter lari.</title>
        <authorList>
            <person name="Miller W.G."/>
            <person name="Wang G."/>
            <person name="Binnewies T.T."/>
            <person name="Parker C.T."/>
        </authorList>
    </citation>
    <scope>NUCLEOTIDE SEQUENCE [LARGE SCALE GENOMIC DNA]</scope>
    <source>
        <strain>RM2100 / D67 / ATCC BAA-1060</strain>
    </source>
</reference>
<feature type="chain" id="PRO_1000146315" description="ATP synthase epsilon chain">
    <location>
        <begin position="1"/>
        <end position="130"/>
    </location>
</feature>
<dbReference type="EMBL" id="CP000932">
    <property type="protein sequence ID" value="ACM63559.1"/>
    <property type="molecule type" value="Genomic_DNA"/>
</dbReference>
<dbReference type="RefSeq" id="WP_012660943.1">
    <property type="nucleotide sequence ID" value="NC_012039.1"/>
</dbReference>
<dbReference type="SMR" id="B9KES4"/>
<dbReference type="STRING" id="306263.Cla_0196"/>
<dbReference type="GeneID" id="93004286"/>
<dbReference type="KEGG" id="cla:CLA_0196"/>
<dbReference type="eggNOG" id="COG0355">
    <property type="taxonomic scope" value="Bacteria"/>
</dbReference>
<dbReference type="HOGENOM" id="CLU_084338_2_1_7"/>
<dbReference type="Proteomes" id="UP000007727">
    <property type="component" value="Chromosome"/>
</dbReference>
<dbReference type="GO" id="GO:0005886">
    <property type="term" value="C:plasma membrane"/>
    <property type="evidence" value="ECO:0007669"/>
    <property type="project" value="UniProtKB-SubCell"/>
</dbReference>
<dbReference type="GO" id="GO:0045259">
    <property type="term" value="C:proton-transporting ATP synthase complex"/>
    <property type="evidence" value="ECO:0007669"/>
    <property type="project" value="UniProtKB-KW"/>
</dbReference>
<dbReference type="GO" id="GO:0005524">
    <property type="term" value="F:ATP binding"/>
    <property type="evidence" value="ECO:0007669"/>
    <property type="project" value="UniProtKB-UniRule"/>
</dbReference>
<dbReference type="GO" id="GO:0046933">
    <property type="term" value="F:proton-transporting ATP synthase activity, rotational mechanism"/>
    <property type="evidence" value="ECO:0007669"/>
    <property type="project" value="UniProtKB-UniRule"/>
</dbReference>
<dbReference type="CDD" id="cd12152">
    <property type="entry name" value="F1-ATPase_delta"/>
    <property type="match status" value="1"/>
</dbReference>
<dbReference type="Gene3D" id="2.60.15.10">
    <property type="entry name" value="F0F1 ATP synthase delta/epsilon subunit, N-terminal"/>
    <property type="match status" value="1"/>
</dbReference>
<dbReference type="HAMAP" id="MF_00530">
    <property type="entry name" value="ATP_synth_epsil_bac"/>
    <property type="match status" value="1"/>
</dbReference>
<dbReference type="InterPro" id="IPR001469">
    <property type="entry name" value="ATP_synth_F1_dsu/esu"/>
</dbReference>
<dbReference type="InterPro" id="IPR020546">
    <property type="entry name" value="ATP_synth_F1_dsu/esu_N"/>
</dbReference>
<dbReference type="InterPro" id="IPR036771">
    <property type="entry name" value="ATPsynth_dsu/esu_N"/>
</dbReference>
<dbReference type="NCBIfam" id="TIGR01216">
    <property type="entry name" value="ATP_synt_epsi"/>
    <property type="match status" value="1"/>
</dbReference>
<dbReference type="PANTHER" id="PTHR13822">
    <property type="entry name" value="ATP SYNTHASE DELTA/EPSILON CHAIN"/>
    <property type="match status" value="1"/>
</dbReference>
<dbReference type="PANTHER" id="PTHR13822:SF10">
    <property type="entry name" value="ATP SYNTHASE EPSILON CHAIN, CHLOROPLASTIC"/>
    <property type="match status" value="1"/>
</dbReference>
<dbReference type="Pfam" id="PF02823">
    <property type="entry name" value="ATP-synt_DE_N"/>
    <property type="match status" value="1"/>
</dbReference>
<dbReference type="SUPFAM" id="SSF51344">
    <property type="entry name" value="Epsilon subunit of F1F0-ATP synthase N-terminal domain"/>
    <property type="match status" value="1"/>
</dbReference>
<comment type="function">
    <text evidence="1">Produces ATP from ADP in the presence of a proton gradient across the membrane.</text>
</comment>
<comment type="subunit">
    <text evidence="1">F-type ATPases have 2 components, CF(1) - the catalytic core - and CF(0) - the membrane proton channel. CF(1) has five subunits: alpha(3), beta(3), gamma(1), delta(1), epsilon(1). CF(0) has three main subunits: a, b and c.</text>
</comment>
<comment type="subcellular location">
    <subcellularLocation>
        <location evidence="1">Cell inner membrane</location>
        <topology evidence="1">Peripheral membrane protein</topology>
    </subcellularLocation>
</comment>
<comment type="similarity">
    <text evidence="1">Belongs to the ATPase epsilon chain family.</text>
</comment>
<keyword id="KW-0066">ATP synthesis</keyword>
<keyword id="KW-0997">Cell inner membrane</keyword>
<keyword id="KW-1003">Cell membrane</keyword>
<keyword id="KW-0139">CF(1)</keyword>
<keyword id="KW-0375">Hydrogen ion transport</keyword>
<keyword id="KW-0406">Ion transport</keyword>
<keyword id="KW-0472">Membrane</keyword>
<keyword id="KW-1185">Reference proteome</keyword>
<keyword id="KW-0813">Transport</keyword>
<protein>
    <recommendedName>
        <fullName evidence="1">ATP synthase epsilon chain</fullName>
    </recommendedName>
    <alternativeName>
        <fullName evidence="1">ATP synthase F1 sector epsilon subunit</fullName>
    </alternativeName>
    <alternativeName>
        <fullName evidence="1">F-ATPase epsilon subunit</fullName>
    </alternativeName>
</protein>
<organism>
    <name type="scientific">Campylobacter lari (strain RM2100 / D67 / ATCC BAA-1060)</name>
    <dbReference type="NCBI Taxonomy" id="306263"/>
    <lineage>
        <taxon>Bacteria</taxon>
        <taxon>Pseudomonadati</taxon>
        <taxon>Campylobacterota</taxon>
        <taxon>Epsilonproteobacteria</taxon>
        <taxon>Campylobacterales</taxon>
        <taxon>Campylobacteraceae</taxon>
        <taxon>Campylobacter</taxon>
    </lineage>
</organism>
<proteinExistence type="inferred from homology"/>
<sequence>MQDLISLEIITPLGMIYQGDARLVVLPGSEGEFGVLKGHASLISSLKAGIIDIEKSDSTHELVAIDSGHAKVSETKVSVLAKGAVWVGGNSDSEIAKRLEEAKDLIKSMSSDSIALASTFAKMDNNVRQK</sequence>
<name>ATPE_CAMLR</name>